<sequence>MSSKTEIPIITDEGDFSAEYETFCQAMNGVADGTFICVSVFGPQSSGKSTLLNDLFGTSFKTMDLSAGRTQTTKGIMARAVDFQTKVAPRVLILDCEGSDSRERNQQEAQNIERHIGCFAAAVSDLLIINVWNHDIGRHSAANYNILSTIFDIYFRSLLKARRKSGNHRPLILLIAIRDAEEDGAELTQRTFESDVHHIYEQSVPKQYHGSFRDYFCLRFWFIPHRRYMKSLYDEKITQLKTDIKEIFDSLLGAETATTLIPLTDSSIYYNNIWDIVRTDKDLDIPSQREIVSNIRCEEFYLEAIEQFSSQVGKVFADVTAAIQVSLGQQSSTFLEQSPDAVKDYPITKLHNACNSFKLTKVLMDLSQECVALYRRKTRHYIPKVVTQWATKLNDDVLAGLKKVAHSFAKGIRESTCQALGAVTAPFRVQITQWLERHEYSDDYASNTNTVDILVPDLISDLTFPQKRLTDLMGLLGAATRVFHKCISVNWAHEYSGLCDTGILVNLPPNDVGPNSNVRIGDNAIETNAGSSVRLSVGYEASEPMVDAHIDDSGAFFSDIRQTGVYSPHLYAFLESLSLSTYGKALSLQKLPAAPPDVANAYDAVCLLHTIILLWYCETMMPLSLIYDITPEIDHVIPESNALFCETMGSILAAVAEAVSSQTRTITASMTQATARLMDDKLYVTLGSLRGVIYESARKTLERSFFSLLSSAFVAPDHQGLLYLQTRLSSPSIYFDLHFDSSSRSSPTDSILPDTQNPVYKQYTDIYLFSTLPALLSPLPRAYNTVGTRLSSGSSSIQSLLPRYRAVPIVAALDMSAFYIPQAALSSFMDRVDAEIIELINKSLGEFFSKSFPLVLQNKIHTKLVYDDQGAQRSYISENSILTEFLSEKKGLISMAQLFEGGTLITENLHSVTIKPTSQEKIDAMLRCAEAEWDKTYQEALEIYRTNKHKDKYKWVWLGLCVFLMLTRKWVYAVLLSKYCLCITILLLSVGLFVYQRTTPDERNASFSIVATSIRERDVGQFWDATKRLAQKVIH</sequence>
<accession>A8BW14</accession>
<evidence type="ECO:0000250" key="1"/>
<evidence type="ECO:0000255" key="2"/>
<evidence type="ECO:0000255" key="3">
    <source>
        <dbReference type="PROSITE-ProRule" id="PRU01052"/>
    </source>
</evidence>
<dbReference type="EC" id="3.6.5.-"/>
<dbReference type="EMBL" id="AACB02000054">
    <property type="protein sequence ID" value="EDO76831.1"/>
    <property type="molecule type" value="Genomic_DNA"/>
</dbReference>
<dbReference type="RefSeq" id="XP_001704505.1">
    <property type="nucleotide sequence ID" value="XM_001704453.1"/>
</dbReference>
<dbReference type="SMR" id="A8BW14"/>
<dbReference type="STRING" id="184922.A8BW14"/>
<dbReference type="EnsemblProtists" id="EDO76831">
    <property type="protein sequence ID" value="EDO76831"/>
    <property type="gene ID" value="GL50803_32509"/>
</dbReference>
<dbReference type="GeneID" id="5697368"/>
<dbReference type="KEGG" id="gla:GL50803_0032509"/>
<dbReference type="VEuPathDB" id="GiardiaDB:GL50803_32509"/>
<dbReference type="HOGENOM" id="CLU_293639_0_0_1"/>
<dbReference type="OMA" id="HEYSDDY"/>
<dbReference type="GO" id="GO:0005789">
    <property type="term" value="C:endoplasmic reticulum membrane"/>
    <property type="evidence" value="ECO:0007669"/>
    <property type="project" value="UniProtKB-SubCell"/>
</dbReference>
<dbReference type="GO" id="GO:0005525">
    <property type="term" value="F:GTP binding"/>
    <property type="evidence" value="ECO:0007669"/>
    <property type="project" value="UniProtKB-KW"/>
</dbReference>
<dbReference type="GO" id="GO:0016787">
    <property type="term" value="F:hydrolase activity"/>
    <property type="evidence" value="ECO:0007669"/>
    <property type="project" value="UniProtKB-KW"/>
</dbReference>
<dbReference type="Gene3D" id="3.40.50.300">
    <property type="entry name" value="P-loop containing nucleotide triphosphate hydrolases"/>
    <property type="match status" value="1"/>
</dbReference>
<dbReference type="InterPro" id="IPR030386">
    <property type="entry name" value="G_GB1_RHD3_dom"/>
</dbReference>
<dbReference type="InterPro" id="IPR027417">
    <property type="entry name" value="P-loop_NTPase"/>
</dbReference>
<dbReference type="InterPro" id="IPR008803">
    <property type="entry name" value="RHD3/Sey1"/>
</dbReference>
<dbReference type="PANTHER" id="PTHR45923">
    <property type="entry name" value="PROTEIN SEY1"/>
    <property type="match status" value="1"/>
</dbReference>
<dbReference type="PANTHER" id="PTHR45923:SF2">
    <property type="entry name" value="PROTEIN SEY1"/>
    <property type="match status" value="1"/>
</dbReference>
<dbReference type="Pfam" id="PF05879">
    <property type="entry name" value="RHD3_GTPase"/>
    <property type="match status" value="1"/>
</dbReference>
<dbReference type="SUPFAM" id="SSF52540">
    <property type="entry name" value="P-loop containing nucleoside triphosphate hydrolases"/>
    <property type="match status" value="1"/>
</dbReference>
<dbReference type="PROSITE" id="PS51715">
    <property type="entry name" value="G_GB1_RHD3"/>
    <property type="match status" value="1"/>
</dbReference>
<proteinExistence type="inferred from homology"/>
<comment type="function">
    <text evidence="1">Probable GTP-binding protein that may be involved in cell development.</text>
</comment>
<comment type="subcellular location">
    <subcellularLocation>
        <location evidence="1">Endoplasmic reticulum membrane</location>
    </subcellularLocation>
</comment>
<comment type="similarity">
    <text evidence="3">Belongs to the TRAFAC class dynamin-like GTPase superfamily. GB1/RHD3 GTPase family. RHD3 subfamily.</text>
</comment>
<feature type="chain" id="PRO_0000384948" description="Protein SEY1 homolog">
    <location>
        <begin position="1"/>
        <end position="1035"/>
    </location>
</feature>
<feature type="domain" description="GB1/RHD3-type G" evidence="3">
    <location>
        <begin position="32"/>
        <end position="267"/>
    </location>
</feature>
<feature type="binding site" evidence="2">
    <location>
        <begin position="42"/>
        <end position="49"/>
    </location>
    <ligand>
        <name>GTP</name>
        <dbReference type="ChEBI" id="CHEBI:37565"/>
    </ligand>
</feature>
<name>SEY1_GIAIC</name>
<gene>
    <name type="ORF">GL50803_32509</name>
</gene>
<protein>
    <recommendedName>
        <fullName>Protein SEY1 homolog</fullName>
        <ecNumber>3.6.5.-</ecNumber>
    </recommendedName>
</protein>
<organism>
    <name type="scientific">Giardia intestinalis (strain ATCC 50803 / WB clone C6)</name>
    <name type="common">Giardia lamblia</name>
    <dbReference type="NCBI Taxonomy" id="184922"/>
    <lineage>
        <taxon>Eukaryota</taxon>
        <taxon>Metamonada</taxon>
        <taxon>Diplomonadida</taxon>
        <taxon>Hexamitidae</taxon>
        <taxon>Giardiinae</taxon>
        <taxon>Giardia</taxon>
    </lineage>
</organism>
<keyword id="KW-0256">Endoplasmic reticulum</keyword>
<keyword id="KW-0342">GTP-binding</keyword>
<keyword id="KW-0378">Hydrolase</keyword>
<keyword id="KW-0472">Membrane</keyword>
<keyword id="KW-0547">Nucleotide-binding</keyword>
<reference key="1">
    <citation type="journal article" date="2007" name="Science">
        <title>Genomic minimalism in the early diverging intestinal parasite Giardia lamblia.</title>
        <authorList>
            <person name="Morrison H.G."/>
            <person name="McArthur A.G."/>
            <person name="Gillin F.D."/>
            <person name="Aley S.B."/>
            <person name="Adam R.D."/>
            <person name="Olsen G.J."/>
            <person name="Best A.A."/>
            <person name="Cande W.Z."/>
            <person name="Chen F."/>
            <person name="Cipriano M.J."/>
            <person name="Davids B.J."/>
            <person name="Dawson S.C."/>
            <person name="Elmendorf H.G."/>
            <person name="Hehl A.B."/>
            <person name="Holder M.E."/>
            <person name="Huse S.M."/>
            <person name="Kim U.U."/>
            <person name="Lasek-Nesselquist E."/>
            <person name="Manning G."/>
            <person name="Nigam A."/>
            <person name="Nixon J.E.J."/>
            <person name="Palm D."/>
            <person name="Passamaneck N.E."/>
            <person name="Prabhu A."/>
            <person name="Reich C.I."/>
            <person name="Reiner D.S."/>
            <person name="Samuelson J."/>
            <person name="Svard S.G."/>
            <person name="Sogin M.L."/>
        </authorList>
    </citation>
    <scope>NUCLEOTIDE SEQUENCE [LARGE SCALE GENOMIC DNA]</scope>
    <source>
        <strain>ATCC 50803 / WB clone C6</strain>
    </source>
</reference>